<proteinExistence type="evidence at protein level"/>
<name>DOCK3_MOUSE</name>
<evidence type="ECO:0000250" key="1"/>
<evidence type="ECO:0000255" key="2"/>
<evidence type="ECO:0000255" key="3">
    <source>
        <dbReference type="PROSITE-ProRule" id="PRU00192"/>
    </source>
</evidence>
<evidence type="ECO:0000255" key="4">
    <source>
        <dbReference type="PROSITE-ProRule" id="PRU00983"/>
    </source>
</evidence>
<evidence type="ECO:0000255" key="5">
    <source>
        <dbReference type="PROSITE-ProRule" id="PRU00984"/>
    </source>
</evidence>
<evidence type="ECO:0000256" key="6">
    <source>
        <dbReference type="SAM" id="MobiDB-lite"/>
    </source>
</evidence>
<evidence type="ECO:0000269" key="7">
    <source>
    </source>
</evidence>
<evidence type="ECO:0000269" key="8">
    <source>
    </source>
</evidence>
<evidence type="ECO:0000269" key="9">
    <source>
    </source>
</evidence>
<evidence type="ECO:0007744" key="10">
    <source>
    </source>
</evidence>
<sequence>MWTPTEEEKYGVVICSFRGSVPQGLVLEIGETVQILEKCEGWYRGVSTKKPNVKGLFPANYIHLKKAIVSNRGQYETVVPLEDSIVTEVTTTLQEWASLWKQLYVKHKVDLFYKLRHVMNELIDLRRQLLSGHLTQDQVREVKRHITVRLDWGNEHLGLDLVPRKDFEVVDSDQISVSDLYKMHLSSRQSVQQSTSQVDTMRPRHGETCRMPVPYHFFFSLKSFTYNTIGEDSDVFFSLYDMREGKQISERFLVRLNKNGGPRNPEKIERMCALFTDLSSKDMKRDLYIVAHVIRIGRMLLNDSKKGPAHLHYRRPYGCAVLSILDVLQSLTELKEEKDFVLKVYTCNNESEWTQIHENIIRKSSTKYSAPSASHGLIISLQLFRGDMEQIRRENPMIFNRGLAITRKLGFPDVIMPGDIRNDLYLTLEKGDFERGGKSVQKNIEVTMYVLYADGEILKDCISLGSGEPNRSSYHSFVLYHSNSPRWGEIIKLPIPIDRFRGSHLRFEFRHCSTKDKGEKKLFGFAFSPLMRDDGTTLSDDIHELYVYKCDENSTFNNHALYLGLPCCKEDYNGCPNIPSSLIFQRSKESFFISTQLSSTKLTQNVDLLALLKWKAFPDRIMDILGRLRHVSGEEIVKFLQDILDTLFVILDDNTEKYGLLVFQSLVFIINLLRDIKYFHFRPVMDTYIQKHFAGALAYKELIRCLKWYMDCSAELIRQDHIQEAMRALEYLFKFIVQSRILYSRATCGMEEEQFRSSIQELFQSIRFVLSLDSRNSETLLFTQAALLNSFPTIFDELLQMFTVQEVAEFVRGTLGSMPSTVHIGQSMDVVKLQSIARTVDSRLFSFSESRRILLPVVLHHIHLHLRQQKELLICSGILGSIFSIVKTSSLEADVMEEVEMMVESLLDVLLQTLLTIMSKSHAQEAVRGHCPVTAEITGEYVSCLLSLLRQMCDTHFQHLLDNFQSKDELKEFLLKIFCVFRNLMKMSVFPRDWMVMRLLTSNIIVTTVQYLSSALHKNFTETDFDFKVWNSYFSLAVLFINQPSLQLEIITSAKRKKILDKYGDMRVMMAYELFSMWQNLGEHKIHFIPGMIGPFLGVTLVPQPEVRNIMIPIFHDMMDWEQRKNGNFKQVEAELIDKLDSMVSEGKGDESYRELFGLLTQLFGPYPSLLEKVEQETWRETGISFVTSVTRLMERLLDYRDCMKGEETENKKVGCTVNLMNFYKSEINKEEMYIRYIHKLCDMHLQAENYTEAAFTLLLYCELLQWEDRPLREFLHYPSQTEWQRKEGLCRKIIHYFNKGKSWEFGIPLCRELACQYESLYDYQSLSWIRKMEASYYDNIIEQQRLEPEFFRVGFYGRKFPFFLRNKEYVCRGHDYERLEAFQQRMLSEFPQAVAMQHPNHPDDAILQCDAQYLQIYAVTPIPDYVDVLQMDRVPDRVKSFYRVNNVRKFRYDRPFHKGPKDKDNEFKSLWIERTTLTLTHSLPGISRWFEVERRELVEVSPLENAIQVVENKNQELRALISQYQHKQVHGNINLLSMCLNGVIDAAVNGGIARYQEAFFDKDYITKHPGDAEKISQLKELMQEQVHVLGVGLAVHEKFVHPEMRPLHKKLIDQFQMMRASLYHEFPGLDKLSPACSGTSTPRGNVLASHSPMSPENIKMTHRHSPMNLMGTGRHSSSSLSSHASSEAGNMMMMGDNSMGEAPEDLYHHMQLAYHNPRYQGSVTNVSVLSSSQASPSSSSLSSTHSAPSQMITSAPSSTRGSPSLPDKYRHAREMMLLLPTHRDRPSSAMYPAAILENGQPPNFQRALFQQVVGACKPCSDPNLSMAEKGHYSLHFDAFHHPLGDTPPALPARTLRKSPLHPIPASPTSPQSGLDGSNSTLSGSASSGVSSLSESNFGHSSEAPPRTDTMDSMPSQAWNGDEGLEPPYLPVHYSLSESAVLDAIKSQPCRSHSAPGCVLPQDPMDPPALPPKPYHPRLPALEHDEGMLLREEAERPRGLHRKASLPPGSVKEEQARLAWEHGRGEQ</sequence>
<comment type="function">
    <text evidence="8">Potential guanine nucleotide exchange factor (GEF). GEF proteins activate some small GTPases by exchanging bound GDP for free GTP. Its interaction with presenilin proteins as well as its ability to stimulate Tau/MAPT phosphorylation suggest that it may be involved in Alzheimer disease. Ectopic expression in nerve cells decreases the secretion of amyloid-beta APBA1 protein and lowers the rate of cell-substratum adhesion, suggesting that it may affect the function of some small GTPase involved in the regulation of actin cytoskeleton or cell adhesion receptors.</text>
</comment>
<comment type="subunit">
    <text evidence="7 8">Interacts with presenilin proteins PSEN1 and PSEN2. Interacts with CRK.</text>
</comment>
<comment type="subcellular location">
    <subcellularLocation>
        <location evidence="7">Cytoplasm</location>
    </subcellularLocation>
</comment>
<comment type="tissue specificity">
    <text evidence="7 9">Expressed in brain, spinal cord, pituitary gland, testis (PubMed:19129390). Not expressed in heart, liver, kidney, spleen and lung. In brain, it is highly expressed in the cerebral cortex and hippocampus, while it is absent in other tissues, except in spinal cord. In the cerebral cortex, it is found within the intermediate (III and IV) and deep (V and VI) layers, whereas it is weakly expressed in superficial layer I. It is also abundant in the piriform cortex. Within the hippocampus, it is expressed in the pyramidal neurons of the CA1, CA2, and CA3 regions and the dentate gyrus.</text>
</comment>
<comment type="domain">
    <text evidence="1">The DOCKER domain may mediate some GEF activity.</text>
</comment>
<comment type="disruption phenotype">
    <text evidence="9">DOCK3 knockout mice show sensorimotor impairment and structural changes in several brain regions, including the spinal cord and cerebellum. Structural changes are consistent with central axonal dystrophy and include a disorganized cytoskeletons, and abnormal accumulation of autophagic vacuoles associated with impaired axonal transport. Common features of mutant mice are gait abnormalities, limb weakness, ataxia, and an impaired ability to swim.</text>
</comment>
<comment type="similarity">
    <text evidence="4">Belongs to the DOCK family.</text>
</comment>
<protein>
    <recommendedName>
        <fullName>Dedicator of cytokinesis protein 3</fullName>
    </recommendedName>
    <alternativeName>
        <fullName>Modifier of cell adhesion</fullName>
    </alternativeName>
    <alternativeName>
        <fullName>Presenilin-binding protein</fullName>
        <shortName>PBP</shortName>
    </alternativeName>
</protein>
<feature type="chain" id="PRO_0000189989" description="Dedicator of cytokinesis protein 3">
    <location>
        <begin position="1"/>
        <end position="2027"/>
    </location>
</feature>
<feature type="domain" description="SH3" evidence="3">
    <location>
        <begin position="6"/>
        <end position="67"/>
    </location>
</feature>
<feature type="domain" description="C2 DOCK-type" evidence="4">
    <location>
        <begin position="421"/>
        <end position="598"/>
    </location>
</feature>
<feature type="domain" description="DOCKER" evidence="5">
    <location>
        <begin position="1225"/>
        <end position="1632"/>
    </location>
</feature>
<feature type="region of interest" description="Disordered" evidence="6">
    <location>
        <begin position="1672"/>
        <end position="1695"/>
    </location>
</feature>
<feature type="region of interest" description="Disordered" evidence="6">
    <location>
        <begin position="1731"/>
        <end position="1768"/>
    </location>
</feature>
<feature type="region of interest" description="Disordered" evidence="6">
    <location>
        <begin position="1846"/>
        <end position="1925"/>
    </location>
</feature>
<feature type="region of interest" description="Disordered" evidence="6">
    <location>
        <begin position="1971"/>
        <end position="2027"/>
    </location>
</feature>
<feature type="short sequence motif" description="SH3-binding" evidence="2">
    <location>
        <begin position="1967"/>
        <end position="1973"/>
    </location>
</feature>
<feature type="compositionally biased region" description="Low complexity" evidence="6">
    <location>
        <begin position="1676"/>
        <end position="1695"/>
    </location>
</feature>
<feature type="compositionally biased region" description="Low complexity" evidence="6">
    <location>
        <begin position="1731"/>
        <end position="1751"/>
    </location>
</feature>
<feature type="compositionally biased region" description="Polar residues" evidence="6">
    <location>
        <begin position="1752"/>
        <end position="1763"/>
    </location>
</feature>
<feature type="compositionally biased region" description="Low complexity" evidence="6">
    <location>
        <begin position="1877"/>
        <end position="1899"/>
    </location>
</feature>
<feature type="compositionally biased region" description="Basic and acidic residues" evidence="6">
    <location>
        <begin position="1981"/>
        <end position="1998"/>
    </location>
</feature>
<feature type="compositionally biased region" description="Basic and acidic residues" evidence="6">
    <location>
        <begin position="2011"/>
        <end position="2027"/>
    </location>
</feature>
<feature type="modified residue" description="Phosphoserine" evidence="10">
    <location>
        <position position="1655"/>
    </location>
</feature>
<accession>Q8CIQ7</accession>
<dbReference type="EMBL" id="AY145302">
    <property type="protein sequence ID" value="AAN12300.1"/>
    <property type="molecule type" value="mRNA"/>
</dbReference>
<dbReference type="SMR" id="Q8CIQ7"/>
<dbReference type="CORUM" id="Q8CIQ7"/>
<dbReference type="FunCoup" id="Q8CIQ7">
    <property type="interactions" value="624"/>
</dbReference>
<dbReference type="IntAct" id="Q8CIQ7">
    <property type="interactions" value="3"/>
</dbReference>
<dbReference type="MINT" id="Q8CIQ7"/>
<dbReference type="STRING" id="10090.ENSMUSP00000047652"/>
<dbReference type="GlyGen" id="Q8CIQ7">
    <property type="glycosylation" value="2 sites, 1 N-linked glycan (1 site), 1 O-linked glycan (1 site)"/>
</dbReference>
<dbReference type="iPTMnet" id="Q8CIQ7"/>
<dbReference type="PhosphoSitePlus" id="Q8CIQ7"/>
<dbReference type="SwissPalm" id="Q8CIQ7"/>
<dbReference type="PaxDb" id="10090-ENSMUSP00000047652"/>
<dbReference type="ProteomicsDB" id="279464"/>
<dbReference type="AGR" id="MGI:2429763"/>
<dbReference type="MGI" id="MGI:2429763">
    <property type="gene designation" value="Dock3"/>
</dbReference>
<dbReference type="eggNOG" id="KOG1998">
    <property type="taxonomic scope" value="Eukaryota"/>
</dbReference>
<dbReference type="InParanoid" id="Q8CIQ7"/>
<dbReference type="PhylomeDB" id="Q8CIQ7"/>
<dbReference type="Reactome" id="R-MMU-9013149">
    <property type="pathway name" value="RAC1 GTPase cycle"/>
</dbReference>
<dbReference type="Reactome" id="R-MMU-9013404">
    <property type="pathway name" value="RAC2 GTPase cycle"/>
</dbReference>
<dbReference type="Reactome" id="R-MMU-9013408">
    <property type="pathway name" value="RHOG GTPase cycle"/>
</dbReference>
<dbReference type="Reactome" id="R-MMU-9032759">
    <property type="pathway name" value="NTRK2 activates RAC1"/>
</dbReference>
<dbReference type="Reactome" id="R-MMU-983231">
    <property type="pathway name" value="Factors involved in megakaryocyte development and platelet production"/>
</dbReference>
<dbReference type="CD-CODE" id="CE726F99">
    <property type="entry name" value="Postsynaptic density"/>
</dbReference>
<dbReference type="ChiTaRS" id="Dock3">
    <property type="organism name" value="mouse"/>
</dbReference>
<dbReference type="PRO" id="PR:Q8CIQ7"/>
<dbReference type="Proteomes" id="UP000000589">
    <property type="component" value="Unplaced"/>
</dbReference>
<dbReference type="RNAct" id="Q8CIQ7">
    <property type="molecule type" value="protein"/>
</dbReference>
<dbReference type="GO" id="GO:0005737">
    <property type="term" value="C:cytoplasm"/>
    <property type="evidence" value="ECO:0000314"/>
    <property type="project" value="MGI"/>
</dbReference>
<dbReference type="GO" id="GO:0005829">
    <property type="term" value="C:cytosol"/>
    <property type="evidence" value="ECO:0000304"/>
    <property type="project" value="Reactome"/>
</dbReference>
<dbReference type="GO" id="GO:0005096">
    <property type="term" value="F:GTPase activator activity"/>
    <property type="evidence" value="ECO:0007669"/>
    <property type="project" value="InterPro"/>
</dbReference>
<dbReference type="GO" id="GO:0005085">
    <property type="term" value="F:guanyl-nucleotide exchange factor activity"/>
    <property type="evidence" value="ECO:0007669"/>
    <property type="project" value="UniProtKB-KW"/>
</dbReference>
<dbReference type="GO" id="GO:0017124">
    <property type="term" value="F:SH3 domain binding"/>
    <property type="evidence" value="ECO:0007669"/>
    <property type="project" value="UniProtKB-KW"/>
</dbReference>
<dbReference type="GO" id="GO:0007264">
    <property type="term" value="P:small GTPase-mediated signal transduction"/>
    <property type="evidence" value="ECO:0007669"/>
    <property type="project" value="InterPro"/>
</dbReference>
<dbReference type="CDD" id="cd08695">
    <property type="entry name" value="C2_Dock-B"/>
    <property type="match status" value="1"/>
</dbReference>
<dbReference type="CDD" id="cd11704">
    <property type="entry name" value="DHR2_DOCK3"/>
    <property type="match status" value="1"/>
</dbReference>
<dbReference type="CDD" id="cd12048">
    <property type="entry name" value="SH3_DOCK3_B"/>
    <property type="match status" value="1"/>
</dbReference>
<dbReference type="FunFam" id="1.25.40.410:FF:000003">
    <property type="entry name" value="Dedicator of cytokinesis protein 4"/>
    <property type="match status" value="1"/>
</dbReference>
<dbReference type="FunFam" id="2.30.30.40:FF:000057">
    <property type="entry name" value="Dedicator of cytokinesis protein 4"/>
    <property type="match status" value="1"/>
</dbReference>
<dbReference type="FunFam" id="2.60.40.150:FF:000045">
    <property type="entry name" value="Dedicator of cytokinesis protein 4"/>
    <property type="match status" value="1"/>
</dbReference>
<dbReference type="FunFam" id="1.20.1270.350:FF:000001">
    <property type="entry name" value="dedicator of cytokinesis protein 4"/>
    <property type="match status" value="1"/>
</dbReference>
<dbReference type="Gene3D" id="1.20.58.740">
    <property type="match status" value="1"/>
</dbReference>
<dbReference type="Gene3D" id="1.25.40.410">
    <property type="match status" value="1"/>
</dbReference>
<dbReference type="Gene3D" id="2.60.40.150">
    <property type="entry name" value="C2 domain"/>
    <property type="match status" value="1"/>
</dbReference>
<dbReference type="Gene3D" id="1.20.1270.350">
    <property type="entry name" value="Dedicator of cytokinesis N-terminal subdomain"/>
    <property type="match status" value="1"/>
</dbReference>
<dbReference type="Gene3D" id="2.30.30.40">
    <property type="entry name" value="SH3 Domains"/>
    <property type="match status" value="1"/>
</dbReference>
<dbReference type="InterPro" id="IPR016024">
    <property type="entry name" value="ARM-type_fold"/>
</dbReference>
<dbReference type="InterPro" id="IPR037811">
    <property type="entry name" value="C2_Dock-B"/>
</dbReference>
<dbReference type="InterPro" id="IPR027007">
    <property type="entry name" value="C2_DOCK-type_domain"/>
</dbReference>
<dbReference type="InterPro" id="IPR035892">
    <property type="entry name" value="C2_domain_sf"/>
</dbReference>
<dbReference type="InterPro" id="IPR026800">
    <property type="entry name" value="DHR2_DOCK3"/>
</dbReference>
<dbReference type="InterPro" id="IPR026791">
    <property type="entry name" value="DOCK"/>
</dbReference>
<dbReference type="InterPro" id="IPR035767">
    <property type="entry name" value="DOCK3_SH3"/>
</dbReference>
<dbReference type="InterPro" id="IPR043161">
    <property type="entry name" value="DOCK_C_lobe_A"/>
</dbReference>
<dbReference type="InterPro" id="IPR043162">
    <property type="entry name" value="DOCK_C_lobe_C"/>
</dbReference>
<dbReference type="InterPro" id="IPR032376">
    <property type="entry name" value="DOCK_N"/>
</dbReference>
<dbReference type="InterPro" id="IPR042455">
    <property type="entry name" value="DOCK_N_sub1"/>
</dbReference>
<dbReference type="InterPro" id="IPR027357">
    <property type="entry name" value="DOCKER_dom"/>
</dbReference>
<dbReference type="InterPro" id="IPR046769">
    <property type="entry name" value="DOCKER_Lobe_A"/>
</dbReference>
<dbReference type="InterPro" id="IPR046770">
    <property type="entry name" value="DOCKER_Lobe_B"/>
</dbReference>
<dbReference type="InterPro" id="IPR046773">
    <property type="entry name" value="DOCKER_Lobe_C"/>
</dbReference>
<dbReference type="InterPro" id="IPR036028">
    <property type="entry name" value="SH3-like_dom_sf"/>
</dbReference>
<dbReference type="InterPro" id="IPR001452">
    <property type="entry name" value="SH3_domain"/>
</dbReference>
<dbReference type="InterPro" id="IPR056372">
    <property type="entry name" value="TPR_DOCK"/>
</dbReference>
<dbReference type="PANTHER" id="PTHR45653">
    <property type="entry name" value="DEDICATOR OF CYTOKINESIS"/>
    <property type="match status" value="1"/>
</dbReference>
<dbReference type="PANTHER" id="PTHR45653:SF4">
    <property type="entry name" value="DEDICATOR OF CYTOKINESIS PROTEIN 3"/>
    <property type="match status" value="1"/>
</dbReference>
<dbReference type="Pfam" id="PF06920">
    <property type="entry name" value="DHR-2_Lobe_A"/>
    <property type="match status" value="1"/>
</dbReference>
<dbReference type="Pfam" id="PF20422">
    <property type="entry name" value="DHR-2_Lobe_B"/>
    <property type="match status" value="1"/>
</dbReference>
<dbReference type="Pfam" id="PF20421">
    <property type="entry name" value="DHR-2_Lobe_C"/>
    <property type="match status" value="1"/>
</dbReference>
<dbReference type="Pfam" id="PF14429">
    <property type="entry name" value="DOCK-C2"/>
    <property type="match status" value="1"/>
</dbReference>
<dbReference type="Pfam" id="PF16172">
    <property type="entry name" value="DOCK_N"/>
    <property type="match status" value="1"/>
</dbReference>
<dbReference type="Pfam" id="PF07653">
    <property type="entry name" value="SH3_2"/>
    <property type="match status" value="1"/>
</dbReference>
<dbReference type="Pfam" id="PF23554">
    <property type="entry name" value="TPR_DOCK"/>
    <property type="match status" value="1"/>
</dbReference>
<dbReference type="SMART" id="SM00326">
    <property type="entry name" value="SH3"/>
    <property type="match status" value="1"/>
</dbReference>
<dbReference type="SUPFAM" id="SSF48371">
    <property type="entry name" value="ARM repeat"/>
    <property type="match status" value="1"/>
</dbReference>
<dbReference type="SUPFAM" id="SSF50044">
    <property type="entry name" value="SH3-domain"/>
    <property type="match status" value="1"/>
</dbReference>
<dbReference type="PROSITE" id="PS51650">
    <property type="entry name" value="C2_DOCK"/>
    <property type="match status" value="1"/>
</dbReference>
<dbReference type="PROSITE" id="PS51651">
    <property type="entry name" value="DOCKER"/>
    <property type="match status" value="1"/>
</dbReference>
<dbReference type="PROSITE" id="PS50002">
    <property type="entry name" value="SH3"/>
    <property type="match status" value="1"/>
</dbReference>
<gene>
    <name type="primary">Dock3</name>
    <name type="synonym">Moca</name>
</gene>
<keyword id="KW-0963">Cytoplasm</keyword>
<keyword id="KW-0344">Guanine-nucleotide releasing factor</keyword>
<keyword id="KW-0597">Phosphoprotein</keyword>
<keyword id="KW-1185">Reference proteome</keyword>
<keyword id="KW-0728">SH3 domain</keyword>
<keyword id="KW-0729">SH3-binding</keyword>
<organism>
    <name type="scientific">Mus musculus</name>
    <name type="common">Mouse</name>
    <dbReference type="NCBI Taxonomy" id="10090"/>
    <lineage>
        <taxon>Eukaryota</taxon>
        <taxon>Metazoa</taxon>
        <taxon>Chordata</taxon>
        <taxon>Craniata</taxon>
        <taxon>Vertebrata</taxon>
        <taxon>Euteleostomi</taxon>
        <taxon>Mammalia</taxon>
        <taxon>Eutheria</taxon>
        <taxon>Euarchontoglires</taxon>
        <taxon>Glires</taxon>
        <taxon>Rodentia</taxon>
        <taxon>Myomorpha</taxon>
        <taxon>Muroidea</taxon>
        <taxon>Muridae</taxon>
        <taxon>Murinae</taxon>
        <taxon>Mus</taxon>
        <taxon>Mus</taxon>
    </lineage>
</organism>
<reference key="1">
    <citation type="journal article" date="2000" name="J. Neurochem.">
        <title>Isolation and characterization of novel presenilin binding protein.</title>
        <authorList>
            <person name="Kashiwa A."/>
            <person name="Yoshida H."/>
            <person name="Lee S."/>
            <person name="Paladino T."/>
            <person name="Liu Y."/>
            <person name="Chen Q."/>
            <person name="Dargusch R."/>
            <person name="Schubert D."/>
            <person name="Kimura H."/>
        </authorList>
    </citation>
    <scope>NUCLEOTIDE SEQUENCE [MRNA]</scope>
    <scope>SUBCELLULAR LOCATION</scope>
    <scope>TISSUE SPECIFICITY</scope>
    <scope>INTERACTION WITH PSEN1 AND CRK</scope>
    <source>
        <tissue>Brain</tissue>
    </source>
</reference>
<reference key="2">
    <citation type="journal article" date="2002" name="J. Cell Biol.">
        <title>A novel mechanism for the regulation of amyloid precursor protein metabolism.</title>
        <authorList>
            <person name="Chen Q."/>
            <person name="Kimura H."/>
            <person name="Schubert D."/>
        </authorList>
    </citation>
    <scope>FUNCTION</scope>
    <scope>INTERACTION WITH PSEN2</scope>
</reference>
<reference key="3">
    <citation type="journal article" date="2009" name="J. Neurosci.">
        <title>Loss of modifier of cell adhesion reveals a pathway leading to axonal degeneration.</title>
        <authorList>
            <person name="Chen Q."/>
            <person name="Peto C.A."/>
            <person name="Shelton G.D."/>
            <person name="Mizisin A."/>
            <person name="Sawchenko P.E."/>
            <person name="Schubert D."/>
        </authorList>
    </citation>
    <scope>DISRUPTION PHENOTYPE</scope>
    <scope>TISSUE SPECIFICITY</scope>
</reference>
<reference key="4">
    <citation type="journal article" date="2010" name="Cell">
        <title>A tissue-specific atlas of mouse protein phosphorylation and expression.</title>
        <authorList>
            <person name="Huttlin E.L."/>
            <person name="Jedrychowski M.P."/>
            <person name="Elias J.E."/>
            <person name="Goswami T."/>
            <person name="Rad R."/>
            <person name="Beausoleil S.A."/>
            <person name="Villen J."/>
            <person name="Haas W."/>
            <person name="Sowa M.E."/>
            <person name="Gygi S.P."/>
        </authorList>
    </citation>
    <scope>PHOSPHORYLATION [LARGE SCALE ANALYSIS] AT SER-1655</scope>
    <scope>IDENTIFICATION BY MASS SPECTROMETRY [LARGE SCALE ANALYSIS]</scope>
    <source>
        <tissue>Brain</tissue>
        <tissue>Testis</tissue>
    </source>
</reference>